<feature type="chain" id="PRO_0000228386" description="4-hydroxy-tetrahydrodipicolinate reductase">
    <location>
        <begin position="1"/>
        <end position="273"/>
    </location>
</feature>
<feature type="active site" description="Proton donor/acceptor" evidence="1">
    <location>
        <position position="159"/>
    </location>
</feature>
<feature type="active site" description="Proton donor" evidence="1">
    <location>
        <position position="163"/>
    </location>
</feature>
<feature type="binding site" evidence="1">
    <location>
        <begin position="12"/>
        <end position="17"/>
    </location>
    <ligand>
        <name>NAD(+)</name>
        <dbReference type="ChEBI" id="CHEBI:57540"/>
    </ligand>
</feature>
<feature type="binding site" evidence="1">
    <location>
        <position position="38"/>
    </location>
    <ligand>
        <name>NAD(+)</name>
        <dbReference type="ChEBI" id="CHEBI:57540"/>
    </ligand>
</feature>
<feature type="binding site" evidence="1">
    <location>
        <position position="39"/>
    </location>
    <ligand>
        <name>NADP(+)</name>
        <dbReference type="ChEBI" id="CHEBI:58349"/>
    </ligand>
</feature>
<feature type="binding site" evidence="1">
    <location>
        <begin position="102"/>
        <end position="104"/>
    </location>
    <ligand>
        <name>NAD(+)</name>
        <dbReference type="ChEBI" id="CHEBI:57540"/>
    </ligand>
</feature>
<feature type="binding site" evidence="1">
    <location>
        <begin position="126"/>
        <end position="129"/>
    </location>
    <ligand>
        <name>NAD(+)</name>
        <dbReference type="ChEBI" id="CHEBI:57540"/>
    </ligand>
</feature>
<feature type="binding site" evidence="1">
    <location>
        <position position="160"/>
    </location>
    <ligand>
        <name>(S)-2,3,4,5-tetrahydrodipicolinate</name>
        <dbReference type="ChEBI" id="CHEBI:16845"/>
    </ligand>
</feature>
<feature type="binding site" evidence="1">
    <location>
        <begin position="169"/>
        <end position="170"/>
    </location>
    <ligand>
        <name>(S)-2,3,4,5-tetrahydrodipicolinate</name>
        <dbReference type="ChEBI" id="CHEBI:16845"/>
    </ligand>
</feature>
<keyword id="KW-0028">Amino-acid biosynthesis</keyword>
<keyword id="KW-0963">Cytoplasm</keyword>
<keyword id="KW-0220">Diaminopimelate biosynthesis</keyword>
<keyword id="KW-0457">Lysine biosynthesis</keyword>
<keyword id="KW-0520">NAD</keyword>
<keyword id="KW-0521">NADP</keyword>
<keyword id="KW-0560">Oxidoreductase</keyword>
<gene>
    <name evidence="1" type="primary">dapB</name>
    <name type="ordered locus">SBO_0030</name>
</gene>
<proteinExistence type="inferred from homology"/>
<sequence length="273" mass="28760">MHDANIRVAIAGAGGRMGRQLIQAALALEGVQLGAALEREGSSLLGSDAGELAGAGKTGVTVQSSLDAVKDDFDVFIDFTRPEGTLNHLAFCRQHGKGMVIGTTGFDEAGKQAIRDAAADIAIVFAANFSVGVNVMLKLLEKAAKVMGDYTDIEIIEAHHRHKVDAPSGTALAMGEAIAHALDKDLKDCAVYSRESHTGERVPGTIGFATVRAGDIVGEHTAMFADIGERLEITHKASSRMTFANGAVRSALWLSGKESGLFDMRDVLDLNSL</sequence>
<evidence type="ECO:0000255" key="1">
    <source>
        <dbReference type="HAMAP-Rule" id="MF_00102"/>
    </source>
</evidence>
<evidence type="ECO:0000305" key="2"/>
<protein>
    <recommendedName>
        <fullName evidence="1">4-hydroxy-tetrahydrodipicolinate reductase</fullName>
        <shortName evidence="1">HTPA reductase</shortName>
        <ecNumber evidence="1">1.17.1.8</ecNumber>
    </recommendedName>
</protein>
<name>DAPB_SHIBS</name>
<organism>
    <name type="scientific">Shigella boydii serotype 4 (strain Sb227)</name>
    <dbReference type="NCBI Taxonomy" id="300268"/>
    <lineage>
        <taxon>Bacteria</taxon>
        <taxon>Pseudomonadati</taxon>
        <taxon>Pseudomonadota</taxon>
        <taxon>Gammaproteobacteria</taxon>
        <taxon>Enterobacterales</taxon>
        <taxon>Enterobacteriaceae</taxon>
        <taxon>Shigella</taxon>
    </lineage>
</organism>
<reference key="1">
    <citation type="journal article" date="2005" name="Nucleic Acids Res.">
        <title>Genome dynamics and diversity of Shigella species, the etiologic agents of bacillary dysentery.</title>
        <authorList>
            <person name="Yang F."/>
            <person name="Yang J."/>
            <person name="Zhang X."/>
            <person name="Chen L."/>
            <person name="Jiang Y."/>
            <person name="Yan Y."/>
            <person name="Tang X."/>
            <person name="Wang J."/>
            <person name="Xiong Z."/>
            <person name="Dong J."/>
            <person name="Xue Y."/>
            <person name="Zhu Y."/>
            <person name="Xu X."/>
            <person name="Sun L."/>
            <person name="Chen S."/>
            <person name="Nie H."/>
            <person name="Peng J."/>
            <person name="Xu J."/>
            <person name="Wang Y."/>
            <person name="Yuan Z."/>
            <person name="Wen Y."/>
            <person name="Yao Z."/>
            <person name="Shen Y."/>
            <person name="Qiang B."/>
            <person name="Hou Y."/>
            <person name="Yu J."/>
            <person name="Jin Q."/>
        </authorList>
    </citation>
    <scope>NUCLEOTIDE SEQUENCE [LARGE SCALE GENOMIC DNA]</scope>
    <source>
        <strain>Sb227</strain>
    </source>
</reference>
<accession>Q326J2</accession>
<dbReference type="EC" id="1.17.1.8" evidence="1"/>
<dbReference type="EMBL" id="CP000036">
    <property type="protein sequence ID" value="ABB64766.1"/>
    <property type="molecule type" value="Genomic_DNA"/>
</dbReference>
<dbReference type="RefSeq" id="WP_000543610.1">
    <property type="nucleotide sequence ID" value="NC_007613.1"/>
</dbReference>
<dbReference type="SMR" id="Q326J2"/>
<dbReference type="KEGG" id="sbo:SBO_0030"/>
<dbReference type="HOGENOM" id="CLU_047479_2_1_6"/>
<dbReference type="UniPathway" id="UPA00034">
    <property type="reaction ID" value="UER00018"/>
</dbReference>
<dbReference type="Proteomes" id="UP000007067">
    <property type="component" value="Chromosome"/>
</dbReference>
<dbReference type="GO" id="GO:0005829">
    <property type="term" value="C:cytosol"/>
    <property type="evidence" value="ECO:0007669"/>
    <property type="project" value="TreeGrafter"/>
</dbReference>
<dbReference type="GO" id="GO:0008839">
    <property type="term" value="F:4-hydroxy-tetrahydrodipicolinate reductase"/>
    <property type="evidence" value="ECO:0007669"/>
    <property type="project" value="UniProtKB-EC"/>
</dbReference>
<dbReference type="GO" id="GO:0051287">
    <property type="term" value="F:NAD binding"/>
    <property type="evidence" value="ECO:0007669"/>
    <property type="project" value="UniProtKB-UniRule"/>
</dbReference>
<dbReference type="GO" id="GO:0050661">
    <property type="term" value="F:NADP binding"/>
    <property type="evidence" value="ECO:0007669"/>
    <property type="project" value="UniProtKB-UniRule"/>
</dbReference>
<dbReference type="GO" id="GO:0016726">
    <property type="term" value="F:oxidoreductase activity, acting on CH or CH2 groups, NAD or NADP as acceptor"/>
    <property type="evidence" value="ECO:0007669"/>
    <property type="project" value="UniProtKB-UniRule"/>
</dbReference>
<dbReference type="GO" id="GO:0019877">
    <property type="term" value="P:diaminopimelate biosynthetic process"/>
    <property type="evidence" value="ECO:0007669"/>
    <property type="project" value="UniProtKB-UniRule"/>
</dbReference>
<dbReference type="GO" id="GO:0009089">
    <property type="term" value="P:lysine biosynthetic process via diaminopimelate"/>
    <property type="evidence" value="ECO:0007669"/>
    <property type="project" value="UniProtKB-UniRule"/>
</dbReference>
<dbReference type="CDD" id="cd02274">
    <property type="entry name" value="DHDPR_N"/>
    <property type="match status" value="1"/>
</dbReference>
<dbReference type="FunFam" id="3.30.360.10:FF:000004">
    <property type="entry name" value="4-hydroxy-tetrahydrodipicolinate reductase"/>
    <property type="match status" value="1"/>
</dbReference>
<dbReference type="FunFam" id="3.40.50.720:FF:000048">
    <property type="entry name" value="4-hydroxy-tetrahydrodipicolinate reductase"/>
    <property type="match status" value="1"/>
</dbReference>
<dbReference type="Gene3D" id="3.30.360.10">
    <property type="entry name" value="Dihydrodipicolinate Reductase, domain 2"/>
    <property type="match status" value="1"/>
</dbReference>
<dbReference type="Gene3D" id="3.40.50.720">
    <property type="entry name" value="NAD(P)-binding Rossmann-like Domain"/>
    <property type="match status" value="1"/>
</dbReference>
<dbReference type="HAMAP" id="MF_00102">
    <property type="entry name" value="DapB"/>
    <property type="match status" value="1"/>
</dbReference>
<dbReference type="InterPro" id="IPR022663">
    <property type="entry name" value="DapB_C"/>
</dbReference>
<dbReference type="InterPro" id="IPR000846">
    <property type="entry name" value="DapB_N"/>
</dbReference>
<dbReference type="InterPro" id="IPR022664">
    <property type="entry name" value="DapB_N_CS"/>
</dbReference>
<dbReference type="InterPro" id="IPR023940">
    <property type="entry name" value="DHDPR_bac"/>
</dbReference>
<dbReference type="InterPro" id="IPR036291">
    <property type="entry name" value="NAD(P)-bd_dom_sf"/>
</dbReference>
<dbReference type="NCBIfam" id="TIGR00036">
    <property type="entry name" value="dapB"/>
    <property type="match status" value="1"/>
</dbReference>
<dbReference type="PANTHER" id="PTHR20836:SF0">
    <property type="entry name" value="4-HYDROXY-TETRAHYDRODIPICOLINATE REDUCTASE 1, CHLOROPLASTIC-RELATED"/>
    <property type="match status" value="1"/>
</dbReference>
<dbReference type="PANTHER" id="PTHR20836">
    <property type="entry name" value="DIHYDRODIPICOLINATE REDUCTASE"/>
    <property type="match status" value="1"/>
</dbReference>
<dbReference type="Pfam" id="PF05173">
    <property type="entry name" value="DapB_C"/>
    <property type="match status" value="1"/>
</dbReference>
<dbReference type="Pfam" id="PF01113">
    <property type="entry name" value="DapB_N"/>
    <property type="match status" value="1"/>
</dbReference>
<dbReference type="PIRSF" id="PIRSF000161">
    <property type="entry name" value="DHPR"/>
    <property type="match status" value="1"/>
</dbReference>
<dbReference type="SUPFAM" id="SSF55347">
    <property type="entry name" value="Glyceraldehyde-3-phosphate dehydrogenase-like, C-terminal domain"/>
    <property type="match status" value="1"/>
</dbReference>
<dbReference type="SUPFAM" id="SSF51735">
    <property type="entry name" value="NAD(P)-binding Rossmann-fold domains"/>
    <property type="match status" value="1"/>
</dbReference>
<dbReference type="PROSITE" id="PS01298">
    <property type="entry name" value="DAPB"/>
    <property type="match status" value="1"/>
</dbReference>
<comment type="function">
    <text evidence="1">Catalyzes the conversion of 4-hydroxy-tetrahydrodipicolinate (HTPA) to tetrahydrodipicolinate.</text>
</comment>
<comment type="catalytic activity">
    <reaction evidence="1">
        <text>(S)-2,3,4,5-tetrahydrodipicolinate + NAD(+) + H2O = (2S,4S)-4-hydroxy-2,3,4,5-tetrahydrodipicolinate + NADH + H(+)</text>
        <dbReference type="Rhea" id="RHEA:35323"/>
        <dbReference type="ChEBI" id="CHEBI:15377"/>
        <dbReference type="ChEBI" id="CHEBI:15378"/>
        <dbReference type="ChEBI" id="CHEBI:16845"/>
        <dbReference type="ChEBI" id="CHEBI:57540"/>
        <dbReference type="ChEBI" id="CHEBI:57945"/>
        <dbReference type="ChEBI" id="CHEBI:67139"/>
        <dbReference type="EC" id="1.17.1.8"/>
    </reaction>
</comment>
<comment type="catalytic activity">
    <reaction evidence="1">
        <text>(S)-2,3,4,5-tetrahydrodipicolinate + NADP(+) + H2O = (2S,4S)-4-hydroxy-2,3,4,5-tetrahydrodipicolinate + NADPH + H(+)</text>
        <dbReference type="Rhea" id="RHEA:35331"/>
        <dbReference type="ChEBI" id="CHEBI:15377"/>
        <dbReference type="ChEBI" id="CHEBI:15378"/>
        <dbReference type="ChEBI" id="CHEBI:16845"/>
        <dbReference type="ChEBI" id="CHEBI:57783"/>
        <dbReference type="ChEBI" id="CHEBI:58349"/>
        <dbReference type="ChEBI" id="CHEBI:67139"/>
        <dbReference type="EC" id="1.17.1.8"/>
    </reaction>
</comment>
<comment type="pathway">
    <text evidence="1">Amino-acid biosynthesis; L-lysine biosynthesis via DAP pathway; (S)-tetrahydrodipicolinate from L-aspartate: step 4/4.</text>
</comment>
<comment type="subunit">
    <text evidence="1">Homotetramer.</text>
</comment>
<comment type="subcellular location">
    <subcellularLocation>
        <location evidence="1">Cytoplasm</location>
    </subcellularLocation>
</comment>
<comment type="similarity">
    <text evidence="1">Belongs to the DapB family.</text>
</comment>
<comment type="caution">
    <text evidence="2">Was originally thought to be a dihydrodipicolinate reductase (DHDPR), catalyzing the conversion of dihydrodipicolinate to tetrahydrodipicolinate. However, it was shown in E.coli that the substrate of the enzymatic reaction is not dihydrodipicolinate (DHDP) but in fact (2S,4S)-4-hydroxy-2,3,4,5-tetrahydrodipicolinic acid (HTPA), the product released by the DapA-catalyzed reaction.</text>
</comment>